<reference key="1">
    <citation type="journal article" date="2006" name="J. Bacteriol.">
        <title>Comparative genomic analysis of 18 Pseudomonas aeruginosa bacteriophages.</title>
        <authorList>
            <person name="Kwan T."/>
            <person name="Liu J."/>
            <person name="Dubow M."/>
            <person name="Gros P."/>
            <person name="Pelletier J."/>
        </authorList>
    </citation>
    <scope>NUCLEOTIDE SEQUENCE [LARGE SCALE GENOMIC DNA]</scope>
</reference>
<reference key="2">
    <citation type="journal article" date="2018" name="Proc. Natl. Acad. Sci. U.S.A.">
        <title>Identification and biosynthesis of thymidine hypermodifications in the genomic DNA of widespread bacterial viruses.</title>
        <authorList>
            <person name="Lee Y.J."/>
            <person name="Dai N."/>
            <person name="Walsh S.E."/>
            <person name="Mueller S."/>
            <person name="Fraser M.E."/>
            <person name="Kauffman K.M."/>
            <person name="Guan C."/>
            <person name="Correa I.R. Jr."/>
            <person name="Weigele P.R."/>
        </authorList>
    </citation>
    <scope>FUNCTION</scope>
</reference>
<reference key="3">
    <citation type="journal article" date="2021" name="Nucleic Acids Res.">
        <title>Pathways of thymidine hypermodification.</title>
        <authorList>
            <person name="Lee Y.J."/>
            <person name="Dai N."/>
            <person name="Mueller S.I."/>
            <person name="Guan C."/>
            <person name="Parker M.J."/>
            <person name="Fraser M.E."/>
            <person name="Walsh S.E."/>
            <person name="Sridar J."/>
            <person name="Mulholland A."/>
            <person name="Nayak K."/>
            <person name="Sun Z."/>
            <person name="Lin Y.C."/>
            <person name="Comb D.G."/>
            <person name="Marks K."/>
            <person name="Gonzalez R."/>
            <person name="Dowling D.P."/>
            <person name="Bandarian V."/>
            <person name="Saleh L."/>
            <person name="Correa I.R."/>
            <person name="Weigele P.R."/>
        </authorList>
    </citation>
    <scope>FUNCTION</scope>
    <scope>CATALYTIC ACTIVITY</scope>
</reference>
<comment type="function">
    <text evidence="1 2">Catalyzes formation of 5-hydroxymethyldeoxyuridylate (5HMdUMP) as a step in the pathway that replaces dTMP by thymidine hypermodifications in the viral genome (PubMed:34522950). As a final result of the pathway of hypermodification, 5-aminoethyl-2'-deoxyuridine (5-NedU) substitutes for about 30% of thymidines in the viral DNA (PubMed:29555775, PubMed:34522950). These modifications probably prevent degradation of viral genome by the host restriction-modification antiviral defense system (PubMed:34522950).</text>
</comment>
<comment type="catalytic activity">
    <reaction evidence="2">
        <text>dUMP + (6R)-5,10-methylene-5,6,7,8-tetrahydrofolate + H2O = 5-hydroxymethyl-dUMP + (6S)-5,6,7,8-tetrahydrofolate</text>
        <dbReference type="Rhea" id="RHEA:48424"/>
        <dbReference type="ChEBI" id="CHEBI:15377"/>
        <dbReference type="ChEBI" id="CHEBI:15636"/>
        <dbReference type="ChEBI" id="CHEBI:57453"/>
        <dbReference type="ChEBI" id="CHEBI:90409"/>
        <dbReference type="ChEBI" id="CHEBI:246422"/>
    </reaction>
</comment>
<comment type="similarity">
    <text evidence="4">Belongs to the thymidylate synthase family.</text>
</comment>
<organismHost>
    <name type="scientific">Pseudomonas aeruginosa</name>
    <dbReference type="NCBI Taxonomy" id="287"/>
</organismHost>
<protein>
    <recommendedName>
        <fullName evidence="4">Deoxyuridylate hydroxymethyltransferase</fullName>
        <shortName evidence="4">Deoxyuridylate hydroxymethylase</shortName>
        <ecNumber evidence="2">2.1.2.-</ecNumber>
    </recommendedName>
    <alternativeName>
        <fullName evidence="3">dUMP hydroxymethylase</fullName>
        <shortName evidence="4">dUMP-HMase</shortName>
    </alternativeName>
    <alternativeName>
        <fullName evidence="3">gp58</fullName>
    </alternativeName>
</protein>
<dbReference type="EC" id="2.1.2.-" evidence="2"/>
<dbReference type="EMBL" id="DQ163916">
    <property type="status" value="NOT_ANNOTATED_CDS"/>
    <property type="molecule type" value="Genomic_DNA"/>
</dbReference>
<dbReference type="RefSeq" id="YP_001294566.1">
    <property type="nucleotide sequence ID" value="NC_007809.1"/>
</dbReference>
<dbReference type="SMR" id="P0DTK3"/>
<dbReference type="GeneID" id="5237100"/>
<dbReference type="GO" id="GO:0004799">
    <property type="term" value="F:thymidylate synthase activity"/>
    <property type="evidence" value="ECO:0007669"/>
    <property type="project" value="TreeGrafter"/>
</dbReference>
<dbReference type="GO" id="GO:0006231">
    <property type="term" value="P:dTMP biosynthetic process"/>
    <property type="evidence" value="ECO:0007669"/>
    <property type="project" value="TreeGrafter"/>
</dbReference>
<dbReference type="GO" id="GO:0032259">
    <property type="term" value="P:methylation"/>
    <property type="evidence" value="ECO:0007669"/>
    <property type="project" value="UniProtKB-KW"/>
</dbReference>
<dbReference type="GO" id="GO:0099018">
    <property type="term" value="P:symbiont-mediated evasion of host restriction-modification system"/>
    <property type="evidence" value="ECO:0007669"/>
    <property type="project" value="UniProtKB-KW"/>
</dbReference>
<dbReference type="GO" id="GO:0052170">
    <property type="term" value="P:symbiont-mediated suppression of host innate immune response"/>
    <property type="evidence" value="ECO:0007669"/>
    <property type="project" value="UniProtKB-KW"/>
</dbReference>
<dbReference type="Gene3D" id="3.30.572.10">
    <property type="entry name" value="Thymidylate synthase/dCMP hydroxymethylase domain"/>
    <property type="match status" value="1"/>
</dbReference>
<dbReference type="InterPro" id="IPR045097">
    <property type="entry name" value="Thymidate_synth/dCMP_Mease"/>
</dbReference>
<dbReference type="InterPro" id="IPR023451">
    <property type="entry name" value="Thymidate_synth/dCMP_Mease_dom"/>
</dbReference>
<dbReference type="InterPro" id="IPR036926">
    <property type="entry name" value="Thymidate_synth/dCMP_Mease_sf"/>
</dbReference>
<dbReference type="PANTHER" id="PTHR11548">
    <property type="entry name" value="THYMIDYLATE SYNTHASE 1"/>
    <property type="match status" value="1"/>
</dbReference>
<dbReference type="PANTHER" id="PTHR11548:SF1">
    <property type="entry name" value="THYMIDYLATE SYNTHASE 1"/>
    <property type="match status" value="1"/>
</dbReference>
<dbReference type="Pfam" id="PF00303">
    <property type="entry name" value="Thymidylat_synt"/>
    <property type="match status" value="1"/>
</dbReference>
<dbReference type="SUPFAM" id="SSF55831">
    <property type="entry name" value="Thymidylate synthase/dCMP hydroxymethylase"/>
    <property type="match status" value="1"/>
</dbReference>
<name>DUHM_BPPM6</name>
<feature type="chain" id="PRO_0000456263" description="Deoxyuridylate hydroxymethyltransferase">
    <location>
        <begin position="1"/>
        <end position="351"/>
    </location>
</feature>
<keyword id="KW-0945">Host-virus interaction</keyword>
<keyword id="KW-1090">Inhibition of host innate immune response by virus</keyword>
<keyword id="KW-0489">Methyltransferase</keyword>
<keyword id="KW-1258">Restriction-modification system evasion by virus</keyword>
<keyword id="KW-0808">Transferase</keyword>
<keyword id="KW-0899">Viral immunoevasion</keyword>
<evidence type="ECO:0000269" key="1">
    <source>
    </source>
</evidence>
<evidence type="ECO:0000269" key="2">
    <source>
    </source>
</evidence>
<evidence type="ECO:0000303" key="3">
    <source>
    </source>
</evidence>
<evidence type="ECO:0000305" key="4"/>
<proteinExistence type="evidence at protein level"/>
<accession>P0DTK3</accession>
<organism>
    <name type="scientific">Pseudomonas phage M6</name>
    <dbReference type="NCBI Taxonomy" id="2911432"/>
    <lineage>
        <taxon>Viruses</taxon>
        <taxon>Duplodnaviria</taxon>
        <taxon>Heunggongvirae</taxon>
        <taxon>Uroviricota</taxon>
        <taxon>Caudoviricetes</taxon>
        <taxon>Mesyanzhinovviridae</taxon>
        <taxon>Rabinowitzvirinae</taxon>
        <taxon>Yuavirus</taxon>
        <taxon>Pseudomonas virus M6</taxon>
    </lineage>
</organism>
<sequence>MKVIKTRNVQQALPEALYQLSFEGVRRDSRNGPVFMFPEPVTTVYLRPAERVLFWAERDANPFFHLMESLWMLGGRNDVEYVARFVDRMRSYSDDGLTFHGAYGFRWRQHFFEDQLPKIIAALKENRDDRRQVLSMWDADADLGRQGKDLPCNLQAIFQIACDGRLDMTVTNRSNDLIWGAYGANAVHFSYLHEYVARSVGVEQGIYRQVSANFHAYEEVLNKVAPLADLAANPMTGTETPDPYAAGIAEPYPLMSTDPEEWNQELMMFLSEPDAVGFRDPFFRRVAIPMMKAHKAFKQTSNPSRFDAALAELDNVAATDWKLAGVEWIERRRAAFEARKARAMDDGVAYE</sequence>